<dbReference type="EMBL" id="GU721055">
    <property type="protein sequence ID" value="ADE28872.1"/>
    <property type="molecule type" value="mRNA"/>
</dbReference>
<dbReference type="EMBL" id="GU721056">
    <property type="protein sequence ID" value="ADE28873.1"/>
    <property type="molecule type" value="mRNA"/>
</dbReference>
<dbReference type="GO" id="GO:0005576">
    <property type="term" value="C:extracellular region"/>
    <property type="evidence" value="ECO:0007669"/>
    <property type="project" value="UniProtKB-SubCell"/>
</dbReference>
<dbReference type="GO" id="GO:0090729">
    <property type="term" value="F:toxin activity"/>
    <property type="evidence" value="ECO:0007669"/>
    <property type="project" value="UniProtKB-KW"/>
</dbReference>
<feature type="signal peptide" evidence="2">
    <location>
        <begin position="1"/>
        <end position="16"/>
    </location>
</feature>
<feature type="peptide" id="PRO_0000415079" description="Turripeptide NCR-01">
    <location>
        <begin position="17"/>
        <end position="118"/>
    </location>
</feature>
<feature type="region of interest" description="Disordered" evidence="3">
    <location>
        <begin position="63"/>
        <end position="118"/>
    </location>
</feature>
<feature type="compositionally biased region" description="Polar residues" evidence="3">
    <location>
        <begin position="85"/>
        <end position="102"/>
    </location>
</feature>
<feature type="sequence conflict" description="In Ref. 1; ADE28873." evidence="4" ref="1">
    <original>A</original>
    <variation>T</variation>
    <location>
        <position position="20"/>
    </location>
</feature>
<feature type="sequence conflict" description="In Ref. 1; ADE28873." evidence="4" ref="1">
    <original>N</original>
    <variation>D</variation>
    <location>
        <position position="55"/>
    </location>
</feature>
<reference key="1">
    <citation type="submission" date="2010-02" db="EMBL/GenBank/DDBJ databases">
        <title>Cysteine-rich toxin gene families from Gemmula speciosa (Reeve, 1843).</title>
        <authorList>
            <person name="Uichanco J.A.V."/>
            <person name="Planta J.R.G."/>
            <person name="Santos A.D."/>
            <person name="Concepcion G.P."/>
        </authorList>
    </citation>
    <scope>NUCLEOTIDE SEQUENCE [MRNA]</scope>
    <source>
        <tissue>Venom duct</tissue>
    </source>
</reference>
<protein>
    <recommendedName>
        <fullName>Turripeptide NCR-01</fullName>
    </recommendedName>
    <alternativeName>
        <fullName>Turripeptide NCR-02</fullName>
    </alternativeName>
</protein>
<sequence length="118" mass="12569">MLRLILAVALVAACLAFPAAKDGPSPGFQKAFQNFNPNAAAGFGGNGMMGGAGMNPNMFNGAQGFQGFLPQPHQKRDSYQHGGYQHQQSFDNFQGSGGMNNDNSDDSFALRNFNNDGY</sequence>
<proteinExistence type="evidence at transcript level"/>
<organism>
    <name type="scientific">Gemmula speciosa</name>
    <name type="common">Splendid gem-turris</name>
    <name type="synonym">Pleurotoma speciosa</name>
    <dbReference type="NCBI Taxonomy" id="439592"/>
    <lineage>
        <taxon>Eukaryota</taxon>
        <taxon>Metazoa</taxon>
        <taxon>Spiralia</taxon>
        <taxon>Lophotrochozoa</taxon>
        <taxon>Mollusca</taxon>
        <taxon>Gastropoda</taxon>
        <taxon>Caenogastropoda</taxon>
        <taxon>Neogastropoda</taxon>
        <taxon>Conoidea</taxon>
        <taxon>Turridae</taxon>
        <taxon>Gemmula</taxon>
    </lineage>
</organism>
<name>TU01_GEMSP</name>
<comment type="subcellular location">
    <subcellularLocation>
        <location evidence="1">Secreted</location>
    </subcellularLocation>
</comment>
<comment type="tissue specificity">
    <text>Expressed by the venom duct.</text>
</comment>
<comment type="miscellaneous">
    <text>The mature peptide contains only 1 cysteine.</text>
</comment>
<accession>D5KXH4</accession>
<accession>D5KXH5</accession>
<keyword id="KW-0528">Neurotoxin</keyword>
<keyword id="KW-0964">Secreted</keyword>
<keyword id="KW-0732">Signal</keyword>
<keyword id="KW-0800">Toxin</keyword>
<evidence type="ECO:0000250" key="1"/>
<evidence type="ECO:0000255" key="2"/>
<evidence type="ECO:0000256" key="3">
    <source>
        <dbReference type="SAM" id="MobiDB-lite"/>
    </source>
</evidence>
<evidence type="ECO:0000305" key="4"/>